<gene>
    <name type="primary">env</name>
</gene>
<organism>
    <name type="scientific">Bovine immunodeficiency virus (strain R29)</name>
    <name type="common">BIV</name>
    <name type="synonym">Bovine immunodeficiency-like virus</name>
    <dbReference type="NCBI Taxonomy" id="417296"/>
    <lineage>
        <taxon>Viruses</taxon>
        <taxon>Riboviria</taxon>
        <taxon>Pararnavirae</taxon>
        <taxon>Artverviricota</taxon>
        <taxon>Revtraviricetes</taxon>
        <taxon>Ortervirales</taxon>
        <taxon>Retroviridae</taxon>
        <taxon>Orthoretrovirinae</taxon>
        <taxon>Lentivirus</taxon>
        <taxon>Bovine immunodeficiency virus</taxon>
    </lineage>
</organism>
<reference key="1">
    <citation type="journal article" date="1990" name="Virology">
        <title>Nucleotide sequence and genome organization of biologically active proviruses of the bovine immunodeficiency-like virus.</title>
        <authorList>
            <person name="Garvey K.J."/>
            <person name="Oberste M.S."/>
            <person name="Elser J.E."/>
            <person name="Braun M.J."/>
            <person name="Gonda M.A."/>
        </authorList>
    </citation>
    <scope>NUCLEOTIDE SEQUENCE [GENOMIC RNA]</scope>
    <source>
        <strain>Isolate R29-106</strain>
        <strain>Isolate R29-127</strain>
    </source>
</reference>
<reference key="2">
    <citation type="submission" date="1992-10" db="EMBL/GenBank/DDBJ databases">
        <title>Isolation and characterization of cDNAs encoding rev and tat of bovine immunodeficiency-like virus.</title>
        <authorList>
            <person name="Nadin-Davis S.A."/>
            <person name="Chang S.C."/>
            <person name="Roth J.A."/>
            <person name="Carpenter S."/>
        </authorList>
    </citation>
    <scope>NUCLEOTIDE SEQUENCE [MRNA]</scope>
    <source>
        <strain>Isolate R29-Nadin</strain>
    </source>
</reference>
<reference key="3">
    <citation type="journal article" date="1991" name="J. Virol.">
        <title>Analysis of the transcription pattern and mapping of the putative rev and env splice junctions of bovine immunodeficiency-like virus.</title>
        <authorList>
            <person name="Oberste M.S."/>
            <person name="Greenwood J.D."/>
            <person name="Gonda M.A."/>
        </authorList>
    </citation>
    <scope>NUCLEOTIDE SEQUENCE [MRNA] OF 1-99</scope>
</reference>
<sequence length="904" mass="102270">MDQDLDGAERGERGGGSEELLQEEINEGRLTAREALQTWINNGEIHPWVLAGMLSMGVGMLLGVYCQLPDTLIWILMFQLCLYWGLGETSRELDKDSWQWVRSVFIIAILGTLTMAGTALADDDQSTLIPNITKIPTKDTEPGCTYPWILILLILAFILGILGIILVLRRSNSEDILAARDTIDWWLSANQEIPPKFAFPIILISSPLAGIIGYYVMERHLEIFKKGCQICGSLSSMWGMLLEEIGRWLARREWNVSRVMVILLISFSWGMYVNRVNASGSHVAMVTSPPGYRIVNDTSQAPWYCFSSAPIPTCSSSQWGDKYFEEKINETLVKQVYEQAAKHSRATWIEPDLLEEAVYELALLSANDSRQVVVENGTDVCSSQNSSTNKGHPMTLLKLRGQVSETWIGNSSLQFCVQWPYVLVGLNNSDSNISFNSGDWIATNCMHPITLNKSAQDLGKNFPRLTFLDGQLSQLKNTLCGHNTNCLKFGNKSFSTNSLILCQDNPIGNDTFYSLSHSFSKQASARWILVKVPSYGFVVVNDTDTPPSLRIRKPRAVGLAIFLLVLAIMAITSSLVAATTLVNQHTTAKVVERVVQNVSYIAQTQDQFTHLFRNINNRLNVLHHRVSYLEYVEEIRQKQVFFGCKPHGRYCHFDFGPEEVGWNNSWNSKTWNDLQDEYDKIEEKILKIRVDWLNSSLSDTQDTFGLETSIFDHLVQLFDWTSWKDWIKIIIVIIVLWLLIKILLGMLRSCAKVSQNYQHLPAEEEDGDTEPESSPARGDPASGSLYENWLNKIGESKNDAYRVWTEEYNSLRILFATCRWDLLTPQLLQLPFFLLTLLLKLLWDIFRHAPILNLKGWTVGQGGTSGQQQPPDFPYVNWTGSREQNNPEGGLDSGAWYEGLRGSQ</sequence>
<keyword id="KW-0165">Cleavage on pair of basic residues</keyword>
<keyword id="KW-0175">Coiled coil</keyword>
<keyword id="KW-1015">Disulfide bond</keyword>
<keyword id="KW-0325">Glycoprotein</keyword>
<keyword id="KW-1032">Host cell membrane</keyword>
<keyword id="KW-1043">Host membrane</keyword>
<keyword id="KW-0945">Host-virus interaction</keyword>
<keyword id="KW-0472">Membrane</keyword>
<keyword id="KW-0812">Transmembrane</keyword>
<keyword id="KW-1133">Transmembrane helix</keyword>
<keyword id="KW-1161">Viral attachment to host cell</keyword>
<keyword id="KW-0261">Viral envelope protein</keyword>
<keyword id="KW-0946">Virion</keyword>
<keyword id="KW-1160">Virus entry into host cell</keyword>
<evidence type="ECO:0000250" key="1"/>
<evidence type="ECO:0000255" key="2"/>
<evidence type="ECO:0000256" key="3">
    <source>
        <dbReference type="SAM" id="MobiDB-lite"/>
    </source>
</evidence>
<organismHost>
    <name type="scientific">Bos taurus</name>
    <name type="common">Bovine</name>
    <dbReference type="NCBI Taxonomy" id="9913"/>
</organismHost>
<dbReference type="EMBL" id="M32690">
    <property type="protein sequence ID" value="AAA91274.1"/>
    <property type="molecule type" value="Genomic_RNA"/>
</dbReference>
<dbReference type="EMBL" id="L04972">
    <property type="protein sequence ID" value="AAA42771.1"/>
    <property type="molecule type" value="Genomic_DNA"/>
</dbReference>
<dbReference type="EMBL" id="M74711">
    <property type="protein sequence ID" value="AAA42762.1"/>
    <property type="molecule type" value="mRNA"/>
</dbReference>
<dbReference type="PIR" id="E34742">
    <property type="entry name" value="VCLJBT"/>
</dbReference>
<dbReference type="RefSeq" id="NP_040566.1">
    <property type="nucleotide sequence ID" value="NC_001413.1"/>
</dbReference>
<dbReference type="GlyCosmos" id="P19557">
    <property type="glycosylation" value="18 sites, No reported glycans"/>
</dbReference>
<dbReference type="GeneID" id="1489969"/>
<dbReference type="KEGG" id="vg:1489969"/>
<dbReference type="Proteomes" id="UP000243495">
    <property type="component" value="Segment"/>
</dbReference>
<dbReference type="GO" id="GO:0020002">
    <property type="term" value="C:host cell plasma membrane"/>
    <property type="evidence" value="ECO:0007669"/>
    <property type="project" value="UniProtKB-SubCell"/>
</dbReference>
<dbReference type="GO" id="GO:0016020">
    <property type="term" value="C:membrane"/>
    <property type="evidence" value="ECO:0007669"/>
    <property type="project" value="UniProtKB-KW"/>
</dbReference>
<dbReference type="GO" id="GO:0019031">
    <property type="term" value="C:viral envelope"/>
    <property type="evidence" value="ECO:0007669"/>
    <property type="project" value="UniProtKB-KW"/>
</dbReference>
<dbReference type="GO" id="GO:0055036">
    <property type="term" value="C:virion membrane"/>
    <property type="evidence" value="ECO:0007669"/>
    <property type="project" value="UniProtKB-SubCell"/>
</dbReference>
<dbReference type="GO" id="GO:0005198">
    <property type="term" value="F:structural molecule activity"/>
    <property type="evidence" value="ECO:0007669"/>
    <property type="project" value="InterPro"/>
</dbReference>
<dbReference type="GO" id="GO:0046718">
    <property type="term" value="P:symbiont entry into host cell"/>
    <property type="evidence" value="ECO:0007669"/>
    <property type="project" value="UniProtKB-KW"/>
</dbReference>
<dbReference type="GO" id="GO:0019062">
    <property type="term" value="P:virion attachment to host cell"/>
    <property type="evidence" value="ECO:0007669"/>
    <property type="project" value="UniProtKB-KW"/>
</dbReference>
<dbReference type="CDD" id="cd09909">
    <property type="entry name" value="HIV-1-like_HR1-HR2"/>
    <property type="match status" value="1"/>
</dbReference>
<dbReference type="InterPro" id="IPR000328">
    <property type="entry name" value="GP41-like"/>
</dbReference>
<dbReference type="Pfam" id="PF05858">
    <property type="entry name" value="BIV_Env"/>
    <property type="match status" value="1"/>
</dbReference>
<protein>
    <recommendedName>
        <fullName>Envelope glycoprotein</fullName>
    </recommendedName>
    <alternativeName>
        <fullName>Env polyprotein</fullName>
    </alternativeName>
    <component>
        <recommendedName>
            <fullName>Surface protein</fullName>
            <shortName>SU</shortName>
        </recommendedName>
        <alternativeName>
            <fullName>Glycoprotein 62</fullName>
            <shortName>gp62</shortName>
        </alternativeName>
    </component>
    <component>
        <recommendedName>
            <fullName>Transmembrane protein</fullName>
            <shortName>TM</shortName>
        </recommendedName>
        <alternativeName>
            <fullName>Glycoprotein 40</fullName>
            <shortName>gp40</shortName>
        </alternativeName>
    </component>
</protein>
<proteinExistence type="evidence at transcript level"/>
<accession>P19557</accession>
<accession>P19556</accession>
<accession>Q65597</accession>
<name>ENV_BIV29</name>
<comment type="function">
    <text evidence="1">The surface protein (SU) attaches the virus to the host cell by binding to its receptor. This interaction triggers the refolding of the transmembrane protein (TM) and is thought to activate its fusogenic potential by unmasking its fusion peptide. Fusion occurs at the host cell plasma membrane (By similarity).</text>
</comment>
<comment type="function">
    <text evidence="1">The transmembrane protein (TM) acts as a class I viral fusion protein. Under the current model, the protein has at least 3 conformational states: pre-fusion native state, pre-hairpin intermediate state, and post-fusion hairpin state. During viral and target cell membrane fusion, the coiled coil regions (heptad repeats) assume a trimer-of-hairpins structure, positioning the fusion peptide in close proximity to the C-terminal region of the ectodomain. The formation of this structure appears to drive apposition and subsequent fusion of viral and target cell membranes. Membranes fusion leads to delivery of the nucleocapsid into the cytoplasm (By similarity).</text>
</comment>
<comment type="subunit">
    <text evidence="1">The mature envelope protein (Env) consists of a trimer of SU-TM heterodimers attached by non-covalent interactions or by a labile interchain disulfide bond.</text>
</comment>
<comment type="subcellular location">
    <molecule>Transmembrane protein</molecule>
    <subcellularLocation>
        <location evidence="1">Virion membrane</location>
        <topology evidence="1">Single-pass type I membrane protein</topology>
    </subcellularLocation>
    <subcellularLocation>
        <location evidence="1">Host cell membrane</location>
        <topology evidence="1">Single-pass type I membrane protein</topology>
    </subcellularLocation>
    <text evidence="1">It is probably concentrated at the site of budding and incorporated into the virions possibly by contacts between the cytoplasmic tail of Env and the N-terminus of Gag.</text>
</comment>
<comment type="subcellular location">
    <molecule>Surface protein</molecule>
    <subcellularLocation>
        <location evidence="1">Virion membrane</location>
        <topology evidence="1">Peripheral membrane protein</topology>
    </subcellularLocation>
    <subcellularLocation>
        <location evidence="1">Host cell membrane</location>
        <topology evidence="1">Peripheral membrane protein</topology>
    </subcellularLocation>
    <text evidence="1">The surface protein is not anchored to the viral envelope, but associates with the extravirion surface through its binding to TM. It is probably concentrated at the site of budding and incorporated into the virions possibly by contacts between the cytoplasmic tail of Env and the N-terminus of Gag (By similarity).</text>
</comment>
<comment type="PTM">
    <text evidence="1">Specific enzymatic cleavages in vivo yield mature proteins. Envelope glycoproteins are synthesized as an inactive precursor that is N-glycosylated and processed likely by host cell furin or by a furin-like protease in the Golgi to yield the mature SU and TM proteins. The cleavage site between SU and TM requires the minimal sequence [KR]-X-[KR]-R (By similarity).</text>
</comment>
<comment type="miscellaneous">
    <text>The sequence shown is that of isolate R29-127.</text>
</comment>
<feature type="chain" id="PRO_0000239521" description="Envelope glycoprotein">
    <location>
        <begin position="1"/>
        <end position="904"/>
    </location>
</feature>
<feature type="chain" id="PRO_0000038685" description="Surface protein" evidence="1">
    <location>
        <begin position="1"/>
        <end position="555"/>
    </location>
</feature>
<feature type="chain" id="PRO_0000038686" description="Transmembrane protein" evidence="1">
    <location>
        <begin position="556"/>
        <end position="904"/>
    </location>
</feature>
<feature type="topological domain" description="Extracellular" evidence="2">
    <location>
        <begin position="1"/>
        <end position="726"/>
    </location>
</feature>
<feature type="transmembrane region" description="Helical" evidence="2">
    <location>
        <begin position="727"/>
        <end position="747"/>
    </location>
</feature>
<feature type="topological domain" description="Cytoplasmic" evidence="2">
    <location>
        <begin position="748"/>
        <end position="904"/>
    </location>
</feature>
<feature type="region of interest" description="Fusion peptide" evidence="2">
    <location>
        <begin position="556"/>
        <end position="576"/>
    </location>
</feature>
<feature type="region of interest" description="Immunosuppression" evidence="1">
    <location>
        <begin position="615"/>
        <end position="631"/>
    </location>
</feature>
<feature type="region of interest" description="Disordered" evidence="3">
    <location>
        <begin position="761"/>
        <end position="783"/>
    </location>
</feature>
<feature type="region of interest" description="Disordered" evidence="3">
    <location>
        <begin position="862"/>
        <end position="904"/>
    </location>
</feature>
<feature type="coiled-coil region" evidence="2">
    <location>
        <begin position="588"/>
        <end position="638"/>
    </location>
</feature>
<feature type="coiled-coil region" evidence="2">
    <location>
        <begin position="676"/>
        <end position="712"/>
    </location>
</feature>
<feature type="compositionally biased region" description="Polar residues" evidence="3">
    <location>
        <begin position="878"/>
        <end position="887"/>
    </location>
</feature>
<feature type="site" description="Cleavage; by host" evidence="1">
    <location>
        <begin position="555"/>
        <end position="556"/>
    </location>
</feature>
<feature type="glycosylation site" description="N-linked (GlcNAc...) asparagine; by host" evidence="2">
    <location>
        <position position="131"/>
    </location>
</feature>
<feature type="glycosylation site" description="N-linked (GlcNAc...) asparagine; by host" evidence="2">
    <location>
        <position position="255"/>
    </location>
</feature>
<feature type="glycosylation site" description="N-linked (GlcNAc...) asparagine; by host" evidence="2">
    <location>
        <position position="277"/>
    </location>
</feature>
<feature type="glycosylation site" description="N-linked (GlcNAc...) asparagine; by host" evidence="2">
    <location>
        <position position="296"/>
    </location>
</feature>
<feature type="glycosylation site" description="N-linked (GlcNAc...) asparagine; by host" evidence="2">
    <location>
        <position position="329"/>
    </location>
</feature>
<feature type="glycosylation site" description="N-linked (GlcNAc...) asparagine; by host" evidence="2">
    <location>
        <position position="367"/>
    </location>
</feature>
<feature type="glycosylation site" description="N-linked (GlcNAc...) asparagine; by host" evidence="2">
    <location>
        <position position="376"/>
    </location>
</feature>
<feature type="glycosylation site" description="N-linked (GlcNAc...) asparagine; by host" evidence="2">
    <location>
        <position position="385"/>
    </location>
</feature>
<feature type="glycosylation site" description="N-linked (GlcNAc...) asparagine; by host" evidence="2">
    <location>
        <position position="410"/>
    </location>
</feature>
<feature type="glycosylation site" description="N-linked (GlcNAc...) asparagine; by host" evidence="2">
    <location>
        <position position="427"/>
    </location>
</feature>
<feature type="glycosylation site" description="N-linked (GlcNAc...) asparagine; by host" evidence="2">
    <location>
        <position position="432"/>
    </location>
</feature>
<feature type="glycosylation site" description="N-linked (GlcNAc...) asparagine; by host" evidence="2">
    <location>
        <position position="452"/>
    </location>
</feature>
<feature type="glycosylation site" description="N-linked (GlcNAc...) asparagine; by host" evidence="2">
    <location>
        <position position="491"/>
    </location>
</feature>
<feature type="glycosylation site" description="N-linked (GlcNAc...) asparagine; by host" evidence="2">
    <location>
        <position position="509"/>
    </location>
</feature>
<feature type="glycosylation site" description="N-linked (GlcNAc...) asparagine; by host" evidence="2">
    <location>
        <position position="541"/>
    </location>
</feature>
<feature type="glycosylation site" description="N-linked (GlcNAc...) asparagine; by host" evidence="2">
    <location>
        <position position="597"/>
    </location>
</feature>
<feature type="glycosylation site" description="N-linked (GlcNAc...) asparagine; by host" evidence="2">
    <location>
        <position position="663"/>
    </location>
</feature>
<feature type="glycosylation site" description="N-linked (GlcNAc...) asparagine; by host" evidence="2">
    <location>
        <position position="694"/>
    </location>
</feature>
<feature type="sequence variant" description="In strain: Isolate R29-106 and Isolate R29-Nadin.">
    <original>G</original>
    <variation>R</variation>
    <location>
        <position position="7"/>
    </location>
</feature>
<feature type="sequence variant" description="In strain: Isolate R29-Nadin.">
    <original>R</original>
    <variation>H</variation>
    <location>
        <position position="10"/>
    </location>
</feature>
<feature type="sequence variant" description="In strain: Isolate R29-106.">
    <original>E</original>
    <variation>K</variation>
    <location>
        <position position="24"/>
    </location>
</feature>
<feature type="sequence variant" description="In strain: Isolate R29-106 and Isolate R29-Nadin.">
    <original>E</original>
    <variation>K</variation>
    <location>
        <position position="92"/>
    </location>
</feature>
<feature type="sequence variant" description="In strain: Isolate R29-106 and Isolate R29-Nadin.">
    <location>
        <begin position="135"/>
        <end position="163"/>
    </location>
</feature>
<feature type="sequence variant" description="In strain: Isolate R29-106.">
    <original>V</original>
    <variation>I</variation>
    <location>
        <position position="216"/>
    </location>
</feature>
<feature type="sequence variant" description="In strain: Isolate R29-Nadin.">
    <original>M</original>
    <variation>T</variation>
    <location>
        <position position="217"/>
    </location>
</feature>
<feature type="sequence variant" description="In strain: Isolate R29-106.">
    <original>S</original>
    <variation>L</variation>
    <location>
        <position position="236"/>
    </location>
</feature>
<feature type="sequence variant" description="In strain: Isolate R29-106.">
    <original>W</original>
    <variation>R</variation>
    <location>
        <position position="248"/>
    </location>
</feature>
<feature type="sequence variant" description="In strain: Isolate R29-106.">
    <original>N</original>
    <variation>S</variation>
    <location>
        <position position="255"/>
    </location>
</feature>
<feature type="sequence variant" description="In strain: Isolate R29-106 and Isolate R29-Nadin.">
    <original>M</original>
    <variation>V</variation>
    <location>
        <position position="260"/>
    </location>
</feature>
<feature type="sequence variant" description="In strain: Isolate R29-Nadin.">
    <original>S</original>
    <variation>P</variation>
    <location>
        <position position="316"/>
    </location>
</feature>
<feature type="sequence variant" description="In strain: Isolate R29-Nadin.">
    <original>E</original>
    <variation>K</variation>
    <location>
        <position position="338"/>
    </location>
</feature>
<feature type="sequence variant" description="In strain: Isolate R29-106 and Isolate R29-Nadin.">
    <original>F</original>
    <variation>L</variation>
    <location>
        <position position="494"/>
    </location>
</feature>
<feature type="sequence variant" description="In strain: Isolate R29-106.">
    <original>K</original>
    <variation>R</variation>
    <location>
        <position position="521"/>
    </location>
</feature>
<feature type="sequence variant" description="In strain: Isolate R29-106.">
    <original>H</original>
    <variation>R</variation>
    <location>
        <position position="624"/>
    </location>
</feature>
<feature type="sequence variant" description="In strain: Isolate R29-106.">
    <original>N</original>
    <variation>S</variation>
    <location>
        <position position="672"/>
    </location>
</feature>
<feature type="sequence variant" description="In strain: Isolate R29-106 and Isolate R29-Nadin.">
    <original>A</original>
    <variation>T</variation>
    <location>
        <position position="762"/>
    </location>
</feature>
<feature type="sequence variant" description="In strain: Isolate R29-Nadin.">
    <original>R</original>
    <variation>K</variation>
    <location>
        <position position="812"/>
    </location>
</feature>
<feature type="sequence variant" description="In strain: Isolate R29-Nadin.">
    <original>T</original>
    <variation>I</variation>
    <location>
        <position position="824"/>
    </location>
</feature>